<feature type="chain" id="PRO_1000052400" description="Large ribosomal subunit protein uL4">
    <location>
        <begin position="1"/>
        <end position="209"/>
    </location>
</feature>
<feature type="region of interest" description="Disordered" evidence="2">
    <location>
        <begin position="45"/>
        <end position="78"/>
    </location>
</feature>
<protein>
    <recommendedName>
        <fullName evidence="1">Large ribosomal subunit protein uL4</fullName>
    </recommendedName>
    <alternativeName>
        <fullName evidence="3">50S ribosomal protein L4</fullName>
    </alternativeName>
</protein>
<name>RL4_FLAPJ</name>
<dbReference type="EMBL" id="AM398681">
    <property type="protein sequence ID" value="CAL43421.1"/>
    <property type="molecule type" value="Genomic_DNA"/>
</dbReference>
<dbReference type="RefSeq" id="WP_011963468.1">
    <property type="nucleotide sequence ID" value="NC_009613.3"/>
</dbReference>
<dbReference type="RefSeq" id="YP_001296232.1">
    <property type="nucleotide sequence ID" value="NC_009613.3"/>
</dbReference>
<dbReference type="SMR" id="A6GZ98"/>
<dbReference type="STRING" id="402612.FP1338"/>
<dbReference type="EnsemblBacteria" id="CAL43421">
    <property type="protein sequence ID" value="CAL43421"/>
    <property type="gene ID" value="FP1338"/>
</dbReference>
<dbReference type="GeneID" id="66553241"/>
<dbReference type="KEGG" id="fps:FP1338"/>
<dbReference type="PATRIC" id="fig|402612.5.peg.1355"/>
<dbReference type="eggNOG" id="COG0088">
    <property type="taxonomic scope" value="Bacteria"/>
</dbReference>
<dbReference type="HOGENOM" id="CLU_041575_5_2_10"/>
<dbReference type="OrthoDB" id="9803201at2"/>
<dbReference type="Proteomes" id="UP000006394">
    <property type="component" value="Chromosome"/>
</dbReference>
<dbReference type="GO" id="GO:1990904">
    <property type="term" value="C:ribonucleoprotein complex"/>
    <property type="evidence" value="ECO:0007669"/>
    <property type="project" value="UniProtKB-KW"/>
</dbReference>
<dbReference type="GO" id="GO:0005840">
    <property type="term" value="C:ribosome"/>
    <property type="evidence" value="ECO:0007669"/>
    <property type="project" value="UniProtKB-KW"/>
</dbReference>
<dbReference type="GO" id="GO:0019843">
    <property type="term" value="F:rRNA binding"/>
    <property type="evidence" value="ECO:0007669"/>
    <property type="project" value="UniProtKB-UniRule"/>
</dbReference>
<dbReference type="GO" id="GO:0003735">
    <property type="term" value="F:structural constituent of ribosome"/>
    <property type="evidence" value="ECO:0007669"/>
    <property type="project" value="InterPro"/>
</dbReference>
<dbReference type="GO" id="GO:0006412">
    <property type="term" value="P:translation"/>
    <property type="evidence" value="ECO:0007669"/>
    <property type="project" value="UniProtKB-UniRule"/>
</dbReference>
<dbReference type="Gene3D" id="3.40.1370.10">
    <property type="match status" value="1"/>
</dbReference>
<dbReference type="HAMAP" id="MF_01328_B">
    <property type="entry name" value="Ribosomal_uL4_B"/>
    <property type="match status" value="1"/>
</dbReference>
<dbReference type="InterPro" id="IPR002136">
    <property type="entry name" value="Ribosomal_uL4"/>
</dbReference>
<dbReference type="InterPro" id="IPR013005">
    <property type="entry name" value="Ribosomal_uL4-like"/>
</dbReference>
<dbReference type="InterPro" id="IPR023574">
    <property type="entry name" value="Ribosomal_uL4_dom_sf"/>
</dbReference>
<dbReference type="NCBIfam" id="TIGR03953">
    <property type="entry name" value="rplD_bact"/>
    <property type="match status" value="1"/>
</dbReference>
<dbReference type="PANTHER" id="PTHR10746">
    <property type="entry name" value="50S RIBOSOMAL PROTEIN L4"/>
    <property type="match status" value="1"/>
</dbReference>
<dbReference type="PANTHER" id="PTHR10746:SF6">
    <property type="entry name" value="LARGE RIBOSOMAL SUBUNIT PROTEIN UL4M"/>
    <property type="match status" value="1"/>
</dbReference>
<dbReference type="Pfam" id="PF00573">
    <property type="entry name" value="Ribosomal_L4"/>
    <property type="match status" value="1"/>
</dbReference>
<dbReference type="SUPFAM" id="SSF52166">
    <property type="entry name" value="Ribosomal protein L4"/>
    <property type="match status" value="1"/>
</dbReference>
<accession>A6GZ98</accession>
<evidence type="ECO:0000255" key="1">
    <source>
        <dbReference type="HAMAP-Rule" id="MF_01328"/>
    </source>
</evidence>
<evidence type="ECO:0000256" key="2">
    <source>
        <dbReference type="SAM" id="MobiDB-lite"/>
    </source>
</evidence>
<evidence type="ECO:0000305" key="3"/>
<reference key="1">
    <citation type="journal article" date="2007" name="Nat. Biotechnol.">
        <title>Complete genome sequence of the fish pathogen Flavobacterium psychrophilum.</title>
        <authorList>
            <person name="Duchaud E."/>
            <person name="Boussaha M."/>
            <person name="Loux V."/>
            <person name="Bernardet J.-F."/>
            <person name="Michel C."/>
            <person name="Kerouault B."/>
            <person name="Mondot S."/>
            <person name="Nicolas P."/>
            <person name="Bossy R."/>
            <person name="Caron C."/>
            <person name="Bessieres P."/>
            <person name="Gibrat J.-F."/>
            <person name="Claverol S."/>
            <person name="Dumetz F."/>
            <person name="Le Henaff M."/>
            <person name="Benmansour A."/>
        </authorList>
    </citation>
    <scope>NUCLEOTIDE SEQUENCE [LARGE SCALE GENOMIC DNA]</scope>
    <source>
        <strain>ATCC 49511 / DSM 21280 / CIP 103535 / JIP02/86</strain>
    </source>
</reference>
<organism>
    <name type="scientific">Flavobacterium psychrophilum (strain ATCC 49511 / DSM 21280 / CIP 103535 / JIP02/86)</name>
    <dbReference type="NCBI Taxonomy" id="402612"/>
    <lineage>
        <taxon>Bacteria</taxon>
        <taxon>Pseudomonadati</taxon>
        <taxon>Bacteroidota</taxon>
        <taxon>Flavobacteriia</taxon>
        <taxon>Flavobacteriales</taxon>
        <taxon>Flavobacteriaceae</taxon>
        <taxon>Flavobacterium</taxon>
    </lineage>
</organism>
<keyword id="KW-1185">Reference proteome</keyword>
<keyword id="KW-0687">Ribonucleoprotein</keyword>
<keyword id="KW-0689">Ribosomal protein</keyword>
<keyword id="KW-0694">RNA-binding</keyword>
<keyword id="KW-0699">rRNA-binding</keyword>
<proteinExistence type="inferred from homology"/>
<sequence>MEVKVLNINGKETGRKVQLSDSVFAIEPNKHAVYLDVKQYLANQRQGTHKAKERAEVAGSTRKIKKQKGTGTARAGSAKNPLFKGGGRVFGPRPRSYSFKLNKTVKRLARRSAFSIKAQEANIIVVEDFVFEAPNTKNFINVLKALGLEDKKSLFVLGDSNKNVYLSSRNLKATNVLTNSELSTYAILNANNLVLLEGSLEGIEENLSK</sequence>
<comment type="function">
    <text evidence="1">One of the primary rRNA binding proteins, this protein initially binds near the 5'-end of the 23S rRNA. It is important during the early stages of 50S assembly. It makes multiple contacts with different domains of the 23S rRNA in the assembled 50S subunit and ribosome.</text>
</comment>
<comment type="function">
    <text evidence="1">Forms part of the polypeptide exit tunnel.</text>
</comment>
<comment type="subunit">
    <text evidence="1">Part of the 50S ribosomal subunit.</text>
</comment>
<comment type="similarity">
    <text evidence="1">Belongs to the universal ribosomal protein uL4 family.</text>
</comment>
<gene>
    <name evidence="1" type="primary">rplD</name>
    <name type="ordered locus">FP1338</name>
</gene>